<comment type="function">
    <text evidence="2">Major non-collagenous bone protein that binds tightly to hydroxyapatite. Appears to form an integral part of the mineralized matrix. Probably important to cell-matrix interaction.</text>
</comment>
<comment type="function">
    <text evidence="1">Acts as a cytokine involved in enhancing production of interferon-gamma and interleukin-12 and reducing production of interleukin-10 and is essential in the pathway that leads to type I immunity.</text>
</comment>
<comment type="subunit">
    <text evidence="1">Interacts (via N-terminus) with integrin ITGA9:ITGB1.</text>
</comment>
<comment type="interaction">
    <interactant intactId="EBI-723648">
        <id>P10451</id>
    </interactant>
    <interactant intactId="EBI-10988864">
        <id>P46379-2</id>
        <label>BAG6</label>
    </interactant>
    <organismsDiffer>false</organismsDiffer>
    <experiments>3</experiments>
</comment>
<comment type="interaction">
    <interactant intactId="EBI-723648">
        <id>P10451</id>
    </interactant>
    <interactant intactId="EBI-7147442">
        <id>Q8IXL6</id>
        <label>FAM20C</label>
    </interactant>
    <organismsDiffer>false</organismsDiffer>
    <experiments>3</experiments>
</comment>
<comment type="interaction">
    <interactant intactId="EBI-723648">
        <id>P10451</id>
    </interactant>
    <interactant intactId="EBI-2515857">
        <id>O43681</id>
        <label>GET3</label>
    </interactant>
    <organismsDiffer>false</organismsDiffer>
    <experiments>3</experiments>
</comment>
<comment type="interaction">
    <interactant intactId="EBI-723648">
        <id>P10451</id>
    </interactant>
    <interactant intactId="EBI-748397">
        <id>P50222</id>
        <label>MEOX2</label>
    </interactant>
    <organismsDiffer>false</organismsDiffer>
    <experiments>3</experiments>
</comment>
<comment type="interaction">
    <interactant intactId="EBI-723648">
        <id>P10451</id>
    </interactant>
    <interactant intactId="EBI-746987">
        <id>P62166</id>
        <label>NCS1</label>
    </interactant>
    <organismsDiffer>false</organismsDiffer>
    <experiments>3</experiments>
</comment>
<comment type="interaction">
    <interactant intactId="EBI-723648">
        <id>P10451</id>
    </interactant>
    <interactant intactId="EBI-347996">
        <id>O43765</id>
        <label>SGTA</label>
    </interactant>
    <organismsDiffer>false</organismsDiffer>
    <experiments>8</experiments>
</comment>
<comment type="interaction">
    <interactant intactId="EBI-723648">
        <id>P10451</id>
    </interactant>
    <interactant intactId="EBI-744081">
        <id>Q96EQ0</id>
        <label>SGTB</label>
    </interactant>
    <organismsDiffer>false</organismsDiffer>
    <experiments>3</experiments>
</comment>
<comment type="interaction">
    <interactant intactId="EBI-11893188">
        <id>PRO_0000020321</id>
    </interactant>
    <interactant intactId="EBI-7147442">
        <id>Q8IXL6</id>
        <label>FAM20C</label>
    </interactant>
    <organismsDiffer>false</organismsDiffer>
    <experiments>2</experiments>
</comment>
<comment type="subcellular location">
    <subcellularLocation>
        <location evidence="8 10 11">Secreted</location>
    </subcellularLocation>
</comment>
<comment type="alternative products">
    <event type="alternative splicing"/>
    <isoform>
        <id>P10451-1</id>
        <name>1</name>
        <name>OPN-a</name>
        <name>OP1B</name>
        <sequence type="displayed"/>
    </isoform>
    <isoform>
        <id>P10451-3</id>
        <name>3</name>
        <name>OPN-c</name>
        <sequence type="described" ref="VSP_003777"/>
    </isoform>
    <isoform>
        <id>P10451-4</id>
        <name>4</name>
        <sequence type="described" ref="VSP_011639"/>
    </isoform>
    <isoform>
        <id>P10451-5</id>
        <name>2</name>
        <name>OPN-b</name>
        <name>OP1A</name>
        <sequence type="described" ref="VSP_043695"/>
    </isoform>
</comment>
<comment type="tissue specificity">
    <text evidence="8 10 11">Detected in cerebrospinal fluid and urine (at protein level) (PubMed:25326458, PubMed:36213313, PubMed:37453717). Bone. Found in plasma.</text>
</comment>
<comment type="PTM">
    <text evidence="2">Forms covalent cross-links mediated by transglutaminase TGM2, between a glutamine and the epsilon-amino group of a lysine residue, forming homopolymers and heteropolymers, increasing its collagen binding properties.</text>
</comment>
<comment type="PTM">
    <text evidence="1 5 6 9">Extensively phosphorylated by FAM20C in the extracellular medium at multiple sites within the S-x-E/pS motif (PubMed:15869464, PubMed:22582013, PubMed:26091039). The phosphorylated form inhibits hydroxyapatite crystallization. Dephosphorylation via a mechanism involving ALPL/TNAP promotes hydroxyapatite crystallization (By similarity).</text>
</comment>
<comment type="PTM">
    <text evidence="5 7 8">O-glycosylated. Isoform 5 is GalNAc O-glycosylated at Thr-59 or Ser-62.</text>
</comment>
<comment type="similarity">
    <text evidence="21">Belongs to the osteopontin family.</text>
</comment>
<comment type="online information" name="Atlas of Genetics and Cytogenetics in Oncology and Haematology">
    <link uri="https://atlasgeneticsoncology.org/gene/42379/SPP1"/>
</comment>
<comment type="online information" name="Wikipedia">
    <link uri="https://en.wikipedia.org/wiki/Osteopontin"/>
    <text>Osteopontin entry</text>
</comment>
<name>OSTP_HUMAN</name>
<proteinExistence type="evidence at protein level"/>
<accession>P10451</accession>
<accession>B2RDA1</accession>
<accession>Q15681</accession>
<accession>Q15682</accession>
<accession>Q15683</accession>
<accession>Q4W597</accession>
<accession>Q567T5</accession>
<accession>Q8NBK2</accession>
<accession>Q96IZ1</accession>
<organism>
    <name type="scientific">Homo sapiens</name>
    <name type="common">Human</name>
    <dbReference type="NCBI Taxonomy" id="9606"/>
    <lineage>
        <taxon>Eukaryota</taxon>
        <taxon>Metazoa</taxon>
        <taxon>Chordata</taxon>
        <taxon>Craniata</taxon>
        <taxon>Vertebrata</taxon>
        <taxon>Euteleostomi</taxon>
        <taxon>Mammalia</taxon>
        <taxon>Eutheria</taxon>
        <taxon>Euarchontoglires</taxon>
        <taxon>Primates</taxon>
        <taxon>Haplorrhini</taxon>
        <taxon>Catarrhini</taxon>
        <taxon>Hominidae</taxon>
        <taxon>Homo</taxon>
    </lineage>
</organism>
<gene>
    <name type="primary">SPP1</name>
    <name type="synonym">BNSP</name>
    <name type="synonym">OPN</name>
    <name type="ORF">PSEC0156</name>
</gene>
<feature type="signal peptide" evidence="3">
    <location>
        <begin position="1"/>
        <end position="16"/>
    </location>
</feature>
<feature type="chain" id="PRO_0000020321" description="Osteopontin">
    <location>
        <begin position="17"/>
        <end position="314"/>
    </location>
</feature>
<feature type="region of interest" description="Disordered" evidence="4">
    <location>
        <begin position="41"/>
        <end position="290"/>
    </location>
</feature>
<feature type="short sequence motif" description="Cell attachment site">
    <location>
        <begin position="159"/>
        <end position="161"/>
    </location>
</feature>
<feature type="compositionally biased region" description="Polar residues" evidence="4">
    <location>
        <begin position="47"/>
        <end position="64"/>
    </location>
</feature>
<feature type="compositionally biased region" description="Acidic residues" evidence="4">
    <location>
        <begin position="86"/>
        <end position="96"/>
    </location>
</feature>
<feature type="compositionally biased region" description="Acidic residues" evidence="4">
    <location>
        <begin position="104"/>
        <end position="115"/>
    </location>
</feature>
<feature type="compositionally biased region" description="Basic and acidic residues" evidence="4">
    <location>
        <begin position="116"/>
        <end position="127"/>
    </location>
</feature>
<feature type="compositionally biased region" description="Basic and acidic residues" evidence="4">
    <location>
        <begin position="249"/>
        <end position="260"/>
    </location>
</feature>
<feature type="compositionally biased region" description="Basic and acidic residues" evidence="4">
    <location>
        <begin position="268"/>
        <end position="290"/>
    </location>
</feature>
<feature type="modified residue" description="Phosphoserine" evidence="5">
    <location>
        <position position="24"/>
    </location>
</feature>
<feature type="modified residue" description="Phosphoserine; by FAM20C" evidence="5 9">
    <location>
        <position position="26"/>
    </location>
</feature>
<feature type="modified residue" description="Phosphoserine; by FAM20C" evidence="5 9">
    <location>
        <position position="27"/>
    </location>
</feature>
<feature type="modified residue" description="Phosphoserine; by FAM20C" evidence="5 9">
    <location>
        <position position="62"/>
    </location>
</feature>
<feature type="modified residue" description="Phosphoserine; by FAM20C" evidence="5 9">
    <location>
        <position position="63"/>
    </location>
</feature>
<feature type="modified residue" description="Phosphothreonine" evidence="5">
    <location>
        <position position="66"/>
    </location>
</feature>
<feature type="modified residue" description="Phosphoserine" evidence="5">
    <location>
        <position position="76"/>
    </location>
</feature>
<feature type="modified residue" description="Phosphoserine" evidence="2">
    <location>
        <position position="78"/>
    </location>
</feature>
<feature type="modified residue" description="Phosphoserine" evidence="5 22">
    <location>
        <position position="81"/>
    </location>
</feature>
<feature type="modified residue" description="Phosphoserine" evidence="5">
    <location>
        <position position="99"/>
    </location>
</feature>
<feature type="modified residue" description="Phosphoserine" evidence="5">
    <location>
        <position position="102"/>
    </location>
</feature>
<feature type="modified residue" description="Phosphoserine" evidence="5">
    <location>
        <position position="105"/>
    </location>
</feature>
<feature type="modified residue" description="Phosphoserine" evidence="5">
    <location>
        <position position="108"/>
    </location>
</feature>
<feature type="modified residue" description="Phosphoserine" evidence="5">
    <location>
        <position position="117"/>
    </location>
</feature>
<feature type="modified residue" description="Phosphoserine" evidence="5">
    <location>
        <position position="120"/>
    </location>
</feature>
<feature type="modified residue" description="Phosphoserine" evidence="5">
    <location>
        <position position="123"/>
    </location>
</feature>
<feature type="modified residue" description="Phosphoserine" evidence="5">
    <location>
        <position position="126"/>
    </location>
</feature>
<feature type="modified residue" description="Phosphoserine" evidence="5">
    <location>
        <position position="129"/>
    </location>
</feature>
<feature type="modified residue" description="Phosphothreonine" evidence="5">
    <location>
        <position position="185"/>
    </location>
</feature>
<feature type="modified residue" description="Phosphothreonine; by FAM20C" evidence="9">
    <location>
        <position position="190"/>
    </location>
</feature>
<feature type="modified residue" description="Phosphoserine; by FAM20C" evidence="5 9">
    <location>
        <position position="191"/>
    </location>
</feature>
<feature type="modified residue" description="Phosphoserine; by FAM20C" evidence="5 9">
    <location>
        <position position="195"/>
    </location>
</feature>
<feature type="modified residue" description="Phosphoserine; by FAM20C" evidence="5 9">
    <location>
        <position position="215"/>
    </location>
</feature>
<feature type="modified residue" description="Phosphoserine; by FAM20C" evidence="5 9 23">
    <location>
        <position position="219"/>
    </location>
</feature>
<feature type="modified residue" description="Phosphoserine; by FAM20C" evidence="5 9 23">
    <location>
        <position position="224"/>
    </location>
</feature>
<feature type="modified residue" description="Phosphotyrosine" evidence="9">
    <location>
        <position position="225"/>
    </location>
</feature>
<feature type="modified residue" description="Phosphoserine; by FAM20C" evidence="5 9">
    <location>
        <position position="228"/>
    </location>
</feature>
<feature type="modified residue" description="Phosphoserine; by FAM20C" evidence="5 9 23">
    <location>
        <position position="234"/>
    </location>
</feature>
<feature type="modified residue" description="Phosphothreonine; by FAM20C" evidence="9">
    <location>
        <position position="237"/>
    </location>
</feature>
<feature type="modified residue" description="Phosphoserine; by FAM20C" evidence="9">
    <location>
        <position position="239"/>
    </location>
</feature>
<feature type="modified residue" description="Phosphoserine; by FAM20C" evidence="9">
    <location>
        <position position="243"/>
    </location>
</feature>
<feature type="modified residue" description="Phosphoserine; by FAM20C" evidence="5 9 23">
    <location>
        <position position="254"/>
    </location>
</feature>
<feature type="modified residue" description="Phosphoserine; by FAM20C" evidence="9">
    <location>
        <position position="258"/>
    </location>
</feature>
<feature type="modified residue" description="Phosphoserine; by FAM20C" evidence="5 9">
    <location>
        <position position="263"/>
    </location>
</feature>
<feature type="modified residue" description="Phosphoserine; by FAM20C" evidence="5 9">
    <location>
        <position position="267"/>
    </location>
</feature>
<feature type="modified residue" description="Phosphoserine; by FAM20C" evidence="9">
    <location>
        <position position="270"/>
    </location>
</feature>
<feature type="modified residue" description="Phosphoserine; by FAM20C" evidence="5 9">
    <location>
        <position position="275"/>
    </location>
</feature>
<feature type="modified residue" description="Phosphoserine; by FAM20C" evidence="5 9">
    <location>
        <position position="280"/>
    </location>
</feature>
<feature type="modified residue" description="Phosphoserine; by FAM20C" evidence="9">
    <location>
        <position position="291"/>
    </location>
</feature>
<feature type="modified residue" description="Phosphoserine; by FAM20C" evidence="5 9">
    <location>
        <position position="303"/>
    </location>
</feature>
<feature type="modified residue" description="Phosphoserine; by FAM20C" evidence="5 9">
    <location>
        <position position="308"/>
    </location>
</feature>
<feature type="modified residue" description="Phosphoserine; by FAM20C" evidence="5 9">
    <location>
        <position position="310"/>
    </location>
</feature>
<feature type="modified residue" description="Phosphoserine; by FAM20C" evidence="9">
    <location>
        <position position="311"/>
    </location>
</feature>
<feature type="glycosylation site" description="O-linked (GalNAc...) threonine" evidence="5">
    <location>
        <position position="134"/>
    </location>
</feature>
<feature type="glycosylation site" description="O-linked (GalNAc...) threonine" evidence="5">
    <location>
        <position position="138"/>
    </location>
</feature>
<feature type="glycosylation site" description="O-linked (GalNAc...) threonine" evidence="5">
    <location>
        <position position="143"/>
    </location>
</feature>
<feature type="glycosylation site" description="O-linked (GalNAc...) threonine" evidence="5">
    <location>
        <position position="147"/>
    </location>
</feature>
<feature type="glycosylation site" description="O-linked (GalNAc...) threonine" evidence="5">
    <location>
        <position position="152"/>
    </location>
</feature>
<feature type="glycosylation site" description="O-linked (Xyl...) (chondroitin sulfate) serine" evidence="8 11">
    <location>
        <position position="234"/>
    </location>
</feature>
<feature type="glycosylation site" description="O-linked (Xyl...) (chondroitin sulfate) serine" evidence="8 10 11">
    <location>
        <position position="308"/>
    </location>
</feature>
<feature type="splice variant" id="VSP_003777" description="In isoform 3." evidence="12 13 18 20">
    <location>
        <begin position="31"/>
        <end position="57"/>
    </location>
</feature>
<feature type="splice variant" id="VSP_043695" description="In isoform 2." evidence="12 13 16 18 19">
    <location>
        <begin position="59"/>
        <end position="72"/>
    </location>
</feature>
<feature type="splice variant" id="VSP_011639" description="In isoform 4." evidence="14">
    <location>
        <begin position="95"/>
        <end position="116"/>
    </location>
</feature>
<feature type="sequence variant" id="VAR_050432" description="In dbSNP:rs7435825.">
    <original>S</original>
    <variation>N</variation>
    <location>
        <position position="224"/>
    </location>
</feature>
<feature type="sequence variant" id="VAR_014717" description="In dbSNP:rs4660.">
    <original>R</original>
    <variation>H</variation>
    <location>
        <position position="301"/>
    </location>
</feature>
<feature type="sequence conflict" description="In Ref. 6; BAA05950." evidence="21" ref="6">
    <original>Q</original>
    <variation>E</variation>
    <location>
        <position position="58"/>
    </location>
</feature>
<feature type="sequence conflict" description="In Ref. 6; BAA05949/BAA05950/BAA05951." evidence="21" ref="6">
    <original>D</original>
    <variation>H</variation>
    <location>
        <position position="188"/>
    </location>
</feature>
<feature type="sequence conflict" description="In Ref. 6; BAA05949/BAA05950/BAA05951." evidence="21" ref="6">
    <original>T</original>
    <variation>A</variation>
    <location>
        <position position="237"/>
    </location>
</feature>
<feature type="strand" evidence="24">
    <location>
        <begin position="44"/>
        <end position="47"/>
    </location>
</feature>
<sequence length="314" mass="35423">MRIAVICFCLLGITCAIPVKQADSGSSEEKQLYNKYPDAVATWLNPDPSQKQNLLAPQNAVSSEETNDFKQETLPSKSNESHDHMDDMDDEDDDDHVDSQDSIDSNDSDDVDDTDDSHQSDESHHSDESDELVTDFPTDLPATEVFTPVVPTVDTYDGRGDSVVYGLRSKSKKFRRPDIQYPDATDEDITSHMESEELNGAYKAIPVAQDLNAPSDWDSRGKDSYETSQLDDQSAETHSHKQSRLYKRKANDESNEHSDVIDSQELSKVSREFHSHEFHSHEDMLVVDPKSKEEDKHLKFRISHELDSASSEVN</sequence>
<keyword id="KW-0002">3D-structure</keyword>
<keyword id="KW-0025">Alternative splicing</keyword>
<keyword id="KW-0091">Biomineralization</keyword>
<keyword id="KW-0130">Cell adhesion</keyword>
<keyword id="KW-0202">Cytokine</keyword>
<keyword id="KW-0903">Direct protein sequencing</keyword>
<keyword id="KW-0325">Glycoprotein</keyword>
<keyword id="KW-0597">Phosphoprotein</keyword>
<keyword id="KW-0654">Proteoglycan</keyword>
<keyword id="KW-1267">Proteomics identification</keyword>
<keyword id="KW-1185">Reference proteome</keyword>
<keyword id="KW-0964">Secreted</keyword>
<keyword id="KW-0730">Sialic acid</keyword>
<keyword id="KW-0732">Signal</keyword>
<dbReference type="EMBL" id="X13694">
    <property type="protein sequence ID" value="CAA31984.1"/>
    <property type="molecule type" value="mRNA"/>
</dbReference>
<dbReference type="EMBL" id="J04765">
    <property type="protein sequence ID" value="AAA59974.1"/>
    <property type="molecule type" value="mRNA"/>
</dbReference>
<dbReference type="EMBL" id="M83248">
    <property type="protein sequence ID" value="AAA17675.1"/>
    <property type="molecule type" value="mRNA"/>
</dbReference>
<dbReference type="EMBL" id="U20758">
    <property type="protein sequence ID" value="AAA86886.1"/>
    <property type="molecule type" value="Genomic_DNA"/>
</dbReference>
<dbReference type="EMBL" id="D14813">
    <property type="protein sequence ID" value="BAA03554.1"/>
    <property type="molecule type" value="Genomic_DNA"/>
</dbReference>
<dbReference type="EMBL" id="D28759">
    <property type="protein sequence ID" value="BAA05949.1"/>
    <property type="molecule type" value="mRNA"/>
</dbReference>
<dbReference type="EMBL" id="D28760">
    <property type="protein sequence ID" value="BAA05950.1"/>
    <property type="molecule type" value="mRNA"/>
</dbReference>
<dbReference type="EMBL" id="D28761">
    <property type="protein sequence ID" value="BAA05951.1"/>
    <property type="molecule type" value="mRNA"/>
</dbReference>
<dbReference type="EMBL" id="AF052124">
    <property type="protein sequence ID" value="AAC28619.1"/>
    <property type="molecule type" value="mRNA"/>
</dbReference>
<dbReference type="EMBL" id="AK290104">
    <property type="protein sequence ID" value="BAF82793.1"/>
    <property type="molecule type" value="mRNA"/>
</dbReference>
<dbReference type="EMBL" id="JF412667">
    <property type="protein sequence ID" value="AEA49031.1"/>
    <property type="molecule type" value="mRNA"/>
</dbReference>
<dbReference type="EMBL" id="AK075463">
    <property type="protein sequence ID" value="BAC11635.1"/>
    <property type="molecule type" value="mRNA"/>
</dbReference>
<dbReference type="EMBL" id="AK290090">
    <property type="protein sequence ID" value="BAF82779.1"/>
    <property type="molecule type" value="mRNA"/>
</dbReference>
<dbReference type="EMBL" id="AK296035">
    <property type="protein sequence ID" value="BAG58801.1"/>
    <property type="molecule type" value="mRNA"/>
</dbReference>
<dbReference type="EMBL" id="AK315461">
    <property type="protein sequence ID" value="BAG37848.1"/>
    <property type="molecule type" value="mRNA"/>
</dbReference>
<dbReference type="EMBL" id="DQ839491">
    <property type="protein sequence ID" value="ABI63352.1"/>
    <property type="molecule type" value="mRNA"/>
</dbReference>
<dbReference type="EMBL" id="DQ846871">
    <property type="protein sequence ID" value="ABI63358.1"/>
    <property type="molecule type" value="mRNA"/>
</dbReference>
<dbReference type="EMBL" id="AC131944">
    <property type="protein sequence ID" value="AAY41035.1"/>
    <property type="molecule type" value="Genomic_DNA"/>
</dbReference>
<dbReference type="EMBL" id="CH471057">
    <property type="protein sequence ID" value="EAX06004.1"/>
    <property type="molecule type" value="Genomic_DNA"/>
</dbReference>
<dbReference type="EMBL" id="CH471057">
    <property type="protein sequence ID" value="EAX06005.1"/>
    <property type="molecule type" value="Genomic_DNA"/>
</dbReference>
<dbReference type="EMBL" id="CH471057">
    <property type="protein sequence ID" value="EAX06006.1"/>
    <property type="molecule type" value="Genomic_DNA"/>
</dbReference>
<dbReference type="EMBL" id="BC007016">
    <property type="protein sequence ID" value="AAH07016.1"/>
    <property type="molecule type" value="mRNA"/>
</dbReference>
<dbReference type="EMBL" id="BC017387">
    <property type="protein sequence ID" value="AAH17387.1"/>
    <property type="molecule type" value="mRNA"/>
</dbReference>
<dbReference type="EMBL" id="BC022844">
    <property type="protein sequence ID" value="AAH22844.1"/>
    <property type="molecule type" value="mRNA"/>
</dbReference>
<dbReference type="EMBL" id="BC093033">
    <property type="protein sequence ID" value="AAH93033.1"/>
    <property type="molecule type" value="mRNA"/>
</dbReference>
<dbReference type="CCDS" id="CCDS34027.1">
    <molecule id="P10451-3"/>
</dbReference>
<dbReference type="CCDS" id="CCDS3626.1">
    <molecule id="P10451-5"/>
</dbReference>
<dbReference type="CCDS" id="CCDS43250.1">
    <molecule id="P10451-1"/>
</dbReference>
<dbReference type="PIR" id="S50028">
    <property type="entry name" value="S09575"/>
</dbReference>
<dbReference type="RefSeq" id="NP_000573.1">
    <molecule id="P10451-5"/>
    <property type="nucleotide sequence ID" value="NM_000582.3"/>
</dbReference>
<dbReference type="RefSeq" id="NP_001035147.1">
    <molecule id="P10451-1"/>
    <property type="nucleotide sequence ID" value="NM_001040058.2"/>
</dbReference>
<dbReference type="RefSeq" id="NP_001035149.1">
    <molecule id="P10451-3"/>
    <property type="nucleotide sequence ID" value="NM_001040060.2"/>
</dbReference>
<dbReference type="RefSeq" id="NP_001238758.1">
    <property type="nucleotide sequence ID" value="NM_001251829.1"/>
</dbReference>
<dbReference type="RefSeq" id="NP_001238759.1">
    <property type="nucleotide sequence ID" value="NM_001251830.1"/>
</dbReference>
<dbReference type="PDB" id="3CXD">
    <property type="method" value="X-ray"/>
    <property type="resolution" value="2.80 A"/>
    <property type="chains" value="P=40-51"/>
</dbReference>
<dbReference type="PDB" id="3DSF">
    <property type="method" value="X-ray"/>
    <property type="resolution" value="2.80 A"/>
    <property type="chains" value="P=40-51"/>
</dbReference>
<dbReference type="PDB" id="9EOU">
    <property type="method" value="X-ray"/>
    <property type="resolution" value="1.55 A"/>
    <property type="chains" value="P=153-168"/>
</dbReference>
<dbReference type="PDBsum" id="3CXD"/>
<dbReference type="PDBsum" id="3DSF"/>
<dbReference type="PDBsum" id="9EOU"/>
<dbReference type="PCDDB" id="P10451"/>
<dbReference type="SMR" id="P10451"/>
<dbReference type="BioGRID" id="112574">
    <property type="interactions" value="124"/>
</dbReference>
<dbReference type="CORUM" id="P10451"/>
<dbReference type="DIP" id="DIP-49933N"/>
<dbReference type="ELM" id="P10451"/>
<dbReference type="FunCoup" id="P10451">
    <property type="interactions" value="746"/>
</dbReference>
<dbReference type="IntAct" id="P10451">
    <property type="interactions" value="24"/>
</dbReference>
<dbReference type="MINT" id="P10451"/>
<dbReference type="STRING" id="9606.ENSP00000378517"/>
<dbReference type="ChEMBL" id="CHEMBL1741309"/>
<dbReference type="GlyConnect" id="474">
    <property type="glycosylation" value="2 N-Linked glycans, 1 O-Linked glycan (1 site)"/>
</dbReference>
<dbReference type="GlyCosmos" id="P10451">
    <property type="glycosylation" value="7 sites, 11 glycans"/>
</dbReference>
<dbReference type="GlyGen" id="P10451">
    <property type="glycosylation" value="14 sites, 4 N-linked glycans (1 site), 8 O-linked glycans (7 sites)"/>
</dbReference>
<dbReference type="iPTMnet" id="P10451"/>
<dbReference type="PhosphoSitePlus" id="P10451"/>
<dbReference type="BioMuta" id="SPP1"/>
<dbReference type="DMDM" id="129260"/>
<dbReference type="jPOST" id="P10451"/>
<dbReference type="MassIVE" id="P10451"/>
<dbReference type="PaxDb" id="9606-ENSP00000378517"/>
<dbReference type="PeptideAtlas" id="P10451"/>
<dbReference type="ProteomicsDB" id="52605">
    <molecule id="P10451-1"/>
</dbReference>
<dbReference type="ProteomicsDB" id="52607">
    <molecule id="P10451-3"/>
</dbReference>
<dbReference type="ProteomicsDB" id="52608">
    <molecule id="P10451-4"/>
</dbReference>
<dbReference type="ProteomicsDB" id="52609">
    <molecule id="P10451-5"/>
</dbReference>
<dbReference type="ABCD" id="P10451">
    <property type="antibodies" value="14 sequenced antibodies"/>
</dbReference>
<dbReference type="Antibodypedia" id="3695">
    <property type="antibodies" value="1570 antibodies from 50 providers"/>
</dbReference>
<dbReference type="CPTC" id="P10451">
    <property type="antibodies" value="1 antibody"/>
</dbReference>
<dbReference type="DNASU" id="6696"/>
<dbReference type="Ensembl" id="ENST00000237623.11">
    <molecule id="P10451-5"/>
    <property type="protein sequence ID" value="ENSP00000237623.7"/>
    <property type="gene ID" value="ENSG00000118785.15"/>
</dbReference>
<dbReference type="Ensembl" id="ENST00000360804.4">
    <molecule id="P10451-3"/>
    <property type="protein sequence ID" value="ENSP00000354042.4"/>
    <property type="gene ID" value="ENSG00000118785.15"/>
</dbReference>
<dbReference type="Ensembl" id="ENST00000395080.8">
    <molecule id="P10451-1"/>
    <property type="protein sequence ID" value="ENSP00000378517.3"/>
    <property type="gene ID" value="ENSG00000118785.15"/>
</dbReference>
<dbReference type="Ensembl" id="ENST00000614857.5">
    <molecule id="P10451-1"/>
    <property type="protein sequence ID" value="ENSP00000477824.2"/>
    <property type="gene ID" value="ENSG00000118785.15"/>
</dbReference>
<dbReference type="GeneID" id="6696"/>
<dbReference type="KEGG" id="hsa:6696"/>
<dbReference type="MANE-Select" id="ENST00000395080.8">
    <property type="protein sequence ID" value="ENSP00000378517.3"/>
    <property type="RefSeq nucleotide sequence ID" value="NM_001040058.2"/>
    <property type="RefSeq protein sequence ID" value="NP_001035147.1"/>
</dbReference>
<dbReference type="UCSC" id="uc003hra.4">
    <molecule id="P10451-1"/>
    <property type="organism name" value="human"/>
</dbReference>
<dbReference type="AGR" id="HGNC:11255"/>
<dbReference type="CTD" id="6696"/>
<dbReference type="DisGeNET" id="6696"/>
<dbReference type="GeneCards" id="SPP1"/>
<dbReference type="HGNC" id="HGNC:11255">
    <property type="gene designation" value="SPP1"/>
</dbReference>
<dbReference type="HPA" id="ENSG00000118785">
    <property type="expression patterns" value="Tissue enhanced (brain, gallbladder, kidney, placenta)"/>
</dbReference>
<dbReference type="MalaCards" id="SPP1"/>
<dbReference type="MIM" id="166490">
    <property type="type" value="gene"/>
</dbReference>
<dbReference type="neXtProt" id="NX_P10451"/>
<dbReference type="OpenTargets" id="ENSG00000118785"/>
<dbReference type="Orphanet" id="93552">
    <property type="disease" value="Pediatric systemic lupus erythematosus"/>
</dbReference>
<dbReference type="Orphanet" id="536">
    <property type="disease" value="Systemic lupus erythematosus"/>
</dbReference>
<dbReference type="PharmGKB" id="PA36085"/>
<dbReference type="VEuPathDB" id="HostDB:ENSG00000118785"/>
<dbReference type="eggNOG" id="ENOG502S5R4">
    <property type="taxonomic scope" value="Eukaryota"/>
</dbReference>
<dbReference type="GeneTree" id="ENSGT00390000002509"/>
<dbReference type="HOGENOM" id="CLU_953033_0_0_1"/>
<dbReference type="InParanoid" id="P10451"/>
<dbReference type="OMA" id="HSAEDHH"/>
<dbReference type="OrthoDB" id="9047304at2759"/>
<dbReference type="PAN-GO" id="P10451">
    <property type="GO annotations" value="5 GO annotations based on evolutionary models"/>
</dbReference>
<dbReference type="PhylomeDB" id="P10451"/>
<dbReference type="TreeFam" id="TF350201"/>
<dbReference type="PathwayCommons" id="P10451"/>
<dbReference type="Reactome" id="R-HSA-1474228">
    <property type="pathway name" value="Degradation of the extracellular matrix"/>
</dbReference>
<dbReference type="Reactome" id="R-HSA-186797">
    <property type="pathway name" value="Signaling by PDGF"/>
</dbReference>
<dbReference type="Reactome" id="R-HSA-216083">
    <property type="pathway name" value="Integrin cell surface interactions"/>
</dbReference>
<dbReference type="Reactome" id="R-HSA-381426">
    <property type="pathway name" value="Regulation of Insulin-like Growth Factor (IGF) transport and uptake by Insulin-like Growth Factor Binding Proteins (IGFBPs)"/>
</dbReference>
<dbReference type="Reactome" id="R-HSA-8949275">
    <property type="pathway name" value="RUNX3 Regulates Immune Response and Cell Migration"/>
</dbReference>
<dbReference type="Reactome" id="R-HSA-8957275">
    <property type="pathway name" value="Post-translational protein phosphorylation"/>
</dbReference>
<dbReference type="Reactome" id="R-HSA-9856532">
    <property type="pathway name" value="Mechanical load activates signaling by PIEZO1 and integrins in osteocytes"/>
</dbReference>
<dbReference type="SignaLink" id="P10451"/>
<dbReference type="SIGNOR" id="P10451"/>
<dbReference type="BioGRID-ORCS" id="6696">
    <property type="hits" value="13 hits in 1150 CRISPR screens"/>
</dbReference>
<dbReference type="ChiTaRS" id="SPP1">
    <property type="organism name" value="human"/>
</dbReference>
<dbReference type="EvolutionaryTrace" id="P10451"/>
<dbReference type="GeneWiki" id="Osteopontin"/>
<dbReference type="GenomeRNAi" id="6696"/>
<dbReference type="Pharos" id="P10451">
    <property type="development level" value="Tbio"/>
</dbReference>
<dbReference type="PRO" id="PR:P10451"/>
<dbReference type="Proteomes" id="UP000005640">
    <property type="component" value="Chromosome 4"/>
</dbReference>
<dbReference type="RNAct" id="P10451">
    <property type="molecule type" value="protein"/>
</dbReference>
<dbReference type="Bgee" id="ENSG00000118785">
    <property type="expression patterns" value="Expressed in gall bladder and 181 other cell types or tissues"/>
</dbReference>
<dbReference type="ExpressionAtlas" id="P10451">
    <property type="expression patterns" value="baseline and differential"/>
</dbReference>
<dbReference type="GO" id="GO:0042995">
    <property type="term" value="C:cell projection"/>
    <property type="evidence" value="ECO:0007669"/>
    <property type="project" value="Ensembl"/>
</dbReference>
<dbReference type="GO" id="GO:0005788">
    <property type="term" value="C:endoplasmic reticulum lumen"/>
    <property type="evidence" value="ECO:0000304"/>
    <property type="project" value="Reactome"/>
</dbReference>
<dbReference type="GO" id="GO:0070062">
    <property type="term" value="C:extracellular exosome"/>
    <property type="evidence" value="ECO:0007005"/>
    <property type="project" value="UniProtKB"/>
</dbReference>
<dbReference type="GO" id="GO:0005576">
    <property type="term" value="C:extracellular region"/>
    <property type="evidence" value="ECO:0000304"/>
    <property type="project" value="Reactome"/>
</dbReference>
<dbReference type="GO" id="GO:0005615">
    <property type="term" value="C:extracellular space"/>
    <property type="evidence" value="ECO:0000314"/>
    <property type="project" value="BHF-UCL"/>
</dbReference>
<dbReference type="GO" id="GO:0005794">
    <property type="term" value="C:Golgi apparatus"/>
    <property type="evidence" value="ECO:0000314"/>
    <property type="project" value="HPA"/>
</dbReference>
<dbReference type="GO" id="GO:0048471">
    <property type="term" value="C:perinuclear region of cytoplasm"/>
    <property type="evidence" value="ECO:0007669"/>
    <property type="project" value="Ensembl"/>
</dbReference>
<dbReference type="GO" id="GO:0005125">
    <property type="term" value="F:cytokine activity"/>
    <property type="evidence" value="ECO:0007669"/>
    <property type="project" value="UniProtKB-KW"/>
</dbReference>
<dbReference type="GO" id="GO:0050840">
    <property type="term" value="F:extracellular matrix binding"/>
    <property type="evidence" value="ECO:0000318"/>
    <property type="project" value="GO_Central"/>
</dbReference>
<dbReference type="GO" id="GO:0005178">
    <property type="term" value="F:integrin binding"/>
    <property type="evidence" value="ECO:0000353"/>
    <property type="project" value="ARUK-UCL"/>
</dbReference>
<dbReference type="GO" id="GO:0036094">
    <property type="term" value="F:small molecule binding"/>
    <property type="evidence" value="ECO:0000269"/>
    <property type="project" value="DisProt"/>
</dbReference>
<dbReference type="GO" id="GO:0006710">
    <property type="term" value="P:androgen catabolic process"/>
    <property type="evidence" value="ECO:0000314"/>
    <property type="project" value="CAFA"/>
</dbReference>
<dbReference type="GO" id="GO:0031214">
    <property type="term" value="P:biomineral tissue development"/>
    <property type="evidence" value="ECO:0007669"/>
    <property type="project" value="UniProtKB-KW"/>
</dbReference>
<dbReference type="GO" id="GO:0007155">
    <property type="term" value="P:cell adhesion"/>
    <property type="evidence" value="ECO:0000314"/>
    <property type="project" value="ARUK-UCL"/>
</dbReference>
<dbReference type="GO" id="GO:0071394">
    <property type="term" value="P:cellular response to testosterone stimulus"/>
    <property type="evidence" value="ECO:0000314"/>
    <property type="project" value="CAFA"/>
</dbReference>
<dbReference type="GO" id="GO:0046697">
    <property type="term" value="P:decidualization"/>
    <property type="evidence" value="ECO:0000304"/>
    <property type="project" value="BHF-UCL"/>
</dbReference>
<dbReference type="GO" id="GO:0007566">
    <property type="term" value="P:embryo implantation"/>
    <property type="evidence" value="ECO:0000304"/>
    <property type="project" value="BHF-UCL"/>
</dbReference>
<dbReference type="GO" id="GO:0048685">
    <property type="term" value="P:negative regulation of collateral sprouting of intact axon in response to injury"/>
    <property type="evidence" value="ECO:0007669"/>
    <property type="project" value="Ensembl"/>
</dbReference>
<dbReference type="GO" id="GO:0001649">
    <property type="term" value="P:osteoblast differentiation"/>
    <property type="evidence" value="ECO:0000318"/>
    <property type="project" value="GO_Central"/>
</dbReference>
<dbReference type="GO" id="GO:0045780">
    <property type="term" value="P:positive regulation of bone resorption"/>
    <property type="evidence" value="ECO:0000318"/>
    <property type="project" value="GO_Central"/>
</dbReference>
<dbReference type="GO" id="GO:0045893">
    <property type="term" value="P:positive regulation of DNA-templated transcription"/>
    <property type="evidence" value="ECO:0000314"/>
    <property type="project" value="CAFA"/>
</dbReference>
<dbReference type="GO" id="GO:2000866">
    <property type="term" value="P:positive regulation of estradiol secretion"/>
    <property type="evidence" value="ECO:0000314"/>
    <property type="project" value="CAFA"/>
</dbReference>
<dbReference type="GO" id="GO:1904612">
    <property type="term" value="P:response to 2,3,7,8-tetrachlorodibenzodioxine"/>
    <property type="evidence" value="ECO:0007669"/>
    <property type="project" value="Ensembl"/>
</dbReference>
<dbReference type="GO" id="GO:0036005">
    <property type="term" value="P:response to macrophage colony-stimulating factor"/>
    <property type="evidence" value="ECO:0007669"/>
    <property type="project" value="Ensembl"/>
</dbReference>
<dbReference type="GO" id="GO:0048545">
    <property type="term" value="P:response to steroid hormone"/>
    <property type="evidence" value="ECO:0007669"/>
    <property type="project" value="Ensembl"/>
</dbReference>
<dbReference type="GO" id="GO:0033280">
    <property type="term" value="P:response to vitamin D"/>
    <property type="evidence" value="ECO:0000314"/>
    <property type="project" value="BHF-UCL"/>
</dbReference>
<dbReference type="DisProt" id="DP00214"/>
<dbReference type="IDEAL" id="IID00649"/>
<dbReference type="InterPro" id="IPR002038">
    <property type="entry name" value="Osteopontin"/>
</dbReference>
<dbReference type="InterPro" id="IPR019841">
    <property type="entry name" value="Osteopontin_CS"/>
</dbReference>
<dbReference type="PANTHER" id="PTHR10607">
    <property type="entry name" value="OSTEOPONTIN"/>
    <property type="match status" value="1"/>
</dbReference>
<dbReference type="PANTHER" id="PTHR10607:SF1">
    <property type="entry name" value="OSTEOPONTIN"/>
    <property type="match status" value="1"/>
</dbReference>
<dbReference type="Pfam" id="PF00865">
    <property type="entry name" value="Osteopontin"/>
    <property type="match status" value="1"/>
</dbReference>
<dbReference type="PRINTS" id="PR00216">
    <property type="entry name" value="OSTEOPONTIN"/>
</dbReference>
<dbReference type="SMART" id="SM00017">
    <property type="entry name" value="OSTEO"/>
    <property type="match status" value="1"/>
</dbReference>
<dbReference type="PROSITE" id="PS00884">
    <property type="entry name" value="OSTEOPONTIN"/>
    <property type="match status" value="1"/>
</dbReference>
<reference key="1">
    <citation type="journal article" date="1989" name="Nucleic Acids Res.">
        <title>The cDNA and derived amino acid sequence for human osteopontin.</title>
        <authorList>
            <person name="Kiefer M.C."/>
            <person name="Bauer D.M."/>
            <person name="Barr P.J."/>
        </authorList>
    </citation>
    <scope>NUCLEOTIDE SEQUENCE [MRNA] (ISOFORM 1)</scope>
</reference>
<reference key="2">
    <citation type="journal article" date="1990" name="Genomics">
        <title>cDNA cloning, mRNA distribution and heterogeneity, chromosomal location, and RFLP analysis of human osteopontin (OPN).</title>
        <authorList>
            <person name="Young M.F."/>
            <person name="Kerr J.M."/>
            <person name="Termine J.D."/>
            <person name="Wewer U.M."/>
            <person name="Wang M.G."/>
            <person name="McBride O.W."/>
            <person name="Fisher L.W."/>
        </authorList>
    </citation>
    <scope>NUCLEOTIDE SEQUENCE [MRNA] (ISOFORM 2)</scope>
</reference>
<reference key="3">
    <citation type="journal article" date="1992" name="Proc. Natl. Acad. Sci. U.S.A.">
        <title>Inhibition of calcium oxalate crystal growth in vitro by uropontin: another member of the aspartic acid-rich protein superfamily.</title>
        <authorList>
            <person name="Shiraga H."/>
            <person name="Min W."/>
            <person name="VanDusen W.J."/>
            <person name="Clayman M.D."/>
            <person name="Miner D."/>
            <person name="Terrell C.H."/>
            <person name="Sherbotie J.R."/>
            <person name="Foreman J.W."/>
            <person name="Przysiecki C."/>
            <person name="Neilson E.G."/>
            <person name="Hoyer J.R."/>
        </authorList>
    </citation>
    <scope>NUCLEOTIDE SEQUENCE [MRNA] (ISOFORM 1)</scope>
</reference>
<reference key="4">
    <citation type="journal article" date="1995" name="Genomics">
        <title>Genomic organization of the human osteopontin gene: exclusion of the locus from a causative role in the pathogenesis of dentinogenesis imperfecta type II.</title>
        <authorList>
            <person name="Crosby A.H."/>
            <person name="Edwards S.J."/>
            <person name="Murray J.C."/>
            <person name="Dixon M.J."/>
        </authorList>
    </citation>
    <scope>NUCLEOTIDE SEQUENCE [GENOMIC DNA] (ISOFORM 1)</scope>
</reference>
<reference key="5">
    <citation type="journal article" date="1994" name="Biochem. J.">
        <title>Cloning and characterization of the human osteopontin gene and its promoter.</title>
        <authorList>
            <person name="Hijiya N."/>
            <person name="Setoguchi M."/>
            <person name="Matsuura K."/>
            <person name="Higuchi Y."/>
            <person name="Akizuki S."/>
            <person name="Yamamoto S."/>
        </authorList>
    </citation>
    <scope>NUCLEOTIDE SEQUENCE [GENOMIC DNA] (ISOFORM 1)</scope>
    <source>
        <tissue>Liver</tissue>
    </source>
</reference>
<reference key="6">
    <citation type="journal article" date="1995" name="Lab. Invest.">
        <title>Expression of osteopontin in human glioma. Its correlation with the malignancy.</title>
        <authorList>
            <person name="Saitoh Y."/>
            <person name="Kuratsu J."/>
            <person name="Takeshima H."/>
            <person name="Yamamoto S."/>
            <person name="Ushio Y."/>
        </authorList>
    </citation>
    <scope>NUCLEOTIDE SEQUENCE [MRNA] (ISOFORMS 1; 2 AND 3)</scope>
</reference>
<reference key="7">
    <citation type="submission" date="1998-03" db="EMBL/GenBank/DDBJ databases">
        <authorList>
            <person name="Yu W."/>
            <person name="Sarginson J."/>
            <person name="Gibbs R.A."/>
        </authorList>
    </citation>
    <scope>NUCLEOTIDE SEQUENCE [LARGE SCALE MRNA] (ISOFORM 2)</scope>
    <source>
        <tissue>Brain</tissue>
    </source>
</reference>
<reference key="8">
    <citation type="submission" date="2011-02" db="EMBL/GenBank/DDBJ databases">
        <title>Osteopontin splice variants in Indian breast cancer patients as biomarker.</title>
        <authorList>
            <person name="Sivakumar S."/>
            <person name="Niranjali Devaraj S."/>
        </authorList>
    </citation>
    <scope>NUCLEOTIDE SEQUENCE [MRNA] (ISOFORM 3)</scope>
</reference>
<reference key="9">
    <citation type="journal article" date="2004" name="Nat. Genet.">
        <title>Complete sequencing and characterization of 21,243 full-length human cDNAs.</title>
        <authorList>
            <person name="Ota T."/>
            <person name="Suzuki Y."/>
            <person name="Nishikawa T."/>
            <person name="Otsuki T."/>
            <person name="Sugiyama T."/>
            <person name="Irie R."/>
            <person name="Wakamatsu A."/>
            <person name="Hayashi K."/>
            <person name="Sato H."/>
            <person name="Nagai K."/>
            <person name="Kimura K."/>
            <person name="Makita H."/>
            <person name="Sekine M."/>
            <person name="Obayashi M."/>
            <person name="Nishi T."/>
            <person name="Shibahara T."/>
            <person name="Tanaka T."/>
            <person name="Ishii S."/>
            <person name="Yamamoto J."/>
            <person name="Saito K."/>
            <person name="Kawai Y."/>
            <person name="Isono Y."/>
            <person name="Nakamura Y."/>
            <person name="Nagahari K."/>
            <person name="Murakami K."/>
            <person name="Yasuda T."/>
            <person name="Iwayanagi T."/>
            <person name="Wagatsuma M."/>
            <person name="Shiratori A."/>
            <person name="Sudo H."/>
            <person name="Hosoiri T."/>
            <person name="Kaku Y."/>
            <person name="Kodaira H."/>
            <person name="Kondo H."/>
            <person name="Sugawara M."/>
            <person name="Takahashi M."/>
            <person name="Kanda K."/>
            <person name="Yokoi T."/>
            <person name="Furuya T."/>
            <person name="Kikkawa E."/>
            <person name="Omura Y."/>
            <person name="Abe K."/>
            <person name="Kamihara K."/>
            <person name="Katsuta N."/>
            <person name="Sato K."/>
            <person name="Tanikawa M."/>
            <person name="Yamazaki M."/>
            <person name="Ninomiya K."/>
            <person name="Ishibashi T."/>
            <person name="Yamashita H."/>
            <person name="Murakawa K."/>
            <person name="Fujimori K."/>
            <person name="Tanai H."/>
            <person name="Kimata M."/>
            <person name="Watanabe M."/>
            <person name="Hiraoka S."/>
            <person name="Chiba Y."/>
            <person name="Ishida S."/>
            <person name="Ono Y."/>
            <person name="Takiguchi S."/>
            <person name="Watanabe S."/>
            <person name="Yosida M."/>
            <person name="Hotuta T."/>
            <person name="Kusano J."/>
            <person name="Kanehori K."/>
            <person name="Takahashi-Fujii A."/>
            <person name="Hara H."/>
            <person name="Tanase T.-O."/>
            <person name="Nomura Y."/>
            <person name="Togiya S."/>
            <person name="Komai F."/>
            <person name="Hara R."/>
            <person name="Takeuchi K."/>
            <person name="Arita M."/>
            <person name="Imose N."/>
            <person name="Musashino K."/>
            <person name="Yuuki H."/>
            <person name="Oshima A."/>
            <person name="Sasaki N."/>
            <person name="Aotsuka S."/>
            <person name="Yoshikawa Y."/>
            <person name="Matsunawa H."/>
            <person name="Ichihara T."/>
            <person name="Shiohata N."/>
            <person name="Sano S."/>
            <person name="Moriya S."/>
            <person name="Momiyama H."/>
            <person name="Satoh N."/>
            <person name="Takami S."/>
            <person name="Terashima Y."/>
            <person name="Suzuki O."/>
            <person name="Nakagawa S."/>
            <person name="Senoh A."/>
            <person name="Mizoguchi H."/>
            <person name="Goto Y."/>
            <person name="Shimizu F."/>
            <person name="Wakebe H."/>
            <person name="Hishigaki H."/>
            <person name="Watanabe T."/>
            <person name="Sugiyama A."/>
            <person name="Takemoto M."/>
            <person name="Kawakami B."/>
            <person name="Yamazaki M."/>
            <person name="Watanabe K."/>
            <person name="Kumagai A."/>
            <person name="Itakura S."/>
            <person name="Fukuzumi Y."/>
            <person name="Fujimori Y."/>
            <person name="Komiyama M."/>
            <person name="Tashiro H."/>
            <person name="Tanigami A."/>
            <person name="Fujiwara T."/>
            <person name="Ono T."/>
            <person name="Yamada K."/>
            <person name="Fujii Y."/>
            <person name="Ozaki K."/>
            <person name="Hirao M."/>
            <person name="Ohmori Y."/>
            <person name="Kawabata A."/>
            <person name="Hikiji T."/>
            <person name="Kobatake N."/>
            <person name="Inagaki H."/>
            <person name="Ikema Y."/>
            <person name="Okamoto S."/>
            <person name="Okitani R."/>
            <person name="Kawakami T."/>
            <person name="Noguchi S."/>
            <person name="Itoh T."/>
            <person name="Shigeta K."/>
            <person name="Senba T."/>
            <person name="Matsumura K."/>
            <person name="Nakajima Y."/>
            <person name="Mizuno T."/>
            <person name="Morinaga M."/>
            <person name="Sasaki M."/>
            <person name="Togashi T."/>
            <person name="Oyama M."/>
            <person name="Hata H."/>
            <person name="Watanabe M."/>
            <person name="Komatsu T."/>
            <person name="Mizushima-Sugano J."/>
            <person name="Satoh T."/>
            <person name="Shirai Y."/>
            <person name="Takahashi Y."/>
            <person name="Nakagawa K."/>
            <person name="Okumura K."/>
            <person name="Nagase T."/>
            <person name="Nomura N."/>
            <person name="Kikuchi H."/>
            <person name="Masuho Y."/>
            <person name="Yamashita R."/>
            <person name="Nakai K."/>
            <person name="Yada T."/>
            <person name="Nakamura Y."/>
            <person name="Ohara O."/>
            <person name="Isogai T."/>
            <person name="Sugano S."/>
        </authorList>
    </citation>
    <scope>NUCLEOTIDE SEQUENCE [LARGE SCALE MRNA] (ISOFORMS 1; 2 AND 3)</scope>
    <source>
        <tissue>Kidney</tissue>
        <tissue>Subthalamic nucleus</tissue>
    </source>
</reference>
<reference key="10">
    <citation type="journal article" date="2005" name="DNA Res.">
        <title>Signal sequence and keyword trap in silico for selection of full-length human cDNAs encoding secretion or membrane proteins from oligo-capped cDNA libraries.</title>
        <authorList>
            <person name="Otsuki T."/>
            <person name="Ota T."/>
            <person name="Nishikawa T."/>
            <person name="Hayashi K."/>
            <person name="Suzuki Y."/>
            <person name="Yamamoto J."/>
            <person name="Wakamatsu A."/>
            <person name="Kimura K."/>
            <person name="Sakamoto K."/>
            <person name="Hatano N."/>
            <person name="Kawai Y."/>
            <person name="Ishii S."/>
            <person name="Saito K."/>
            <person name="Kojima S."/>
            <person name="Sugiyama T."/>
            <person name="Ono T."/>
            <person name="Okano K."/>
            <person name="Yoshikawa Y."/>
            <person name="Aotsuka S."/>
            <person name="Sasaki N."/>
            <person name="Hattori A."/>
            <person name="Okumura K."/>
            <person name="Nagai K."/>
            <person name="Sugano S."/>
            <person name="Isogai T."/>
        </authorList>
    </citation>
    <scope>NUCLEOTIDE SEQUENCE [LARGE SCALE MRNA] (ISOFORM 4)</scope>
    <source>
        <tissue>Placenta</tissue>
    </source>
</reference>
<reference key="11">
    <citation type="submission" date="2006-07" db="EMBL/GenBank/DDBJ databases">
        <title>A computer system platform used to predict novel genes.</title>
        <authorList>
            <person name="Yu Z."/>
            <person name="Zheng Z."/>
            <person name="Tang T."/>
            <person name="Fu Y."/>
        </authorList>
    </citation>
    <scope>NUCLEOTIDE SEQUENCE [LARGE SCALE MRNA] (ISOFORM 1)</scope>
</reference>
<reference key="12">
    <citation type="journal article" date="2005" name="Nature">
        <title>Generation and annotation of the DNA sequences of human chromosomes 2 and 4.</title>
        <authorList>
            <person name="Hillier L.W."/>
            <person name="Graves T.A."/>
            <person name="Fulton R.S."/>
            <person name="Fulton L.A."/>
            <person name="Pepin K.H."/>
            <person name="Minx P."/>
            <person name="Wagner-McPherson C."/>
            <person name="Layman D."/>
            <person name="Wylie K."/>
            <person name="Sekhon M."/>
            <person name="Becker M.C."/>
            <person name="Fewell G.A."/>
            <person name="Delehaunty K.D."/>
            <person name="Miner T.L."/>
            <person name="Nash W.E."/>
            <person name="Kremitzki C."/>
            <person name="Oddy L."/>
            <person name="Du H."/>
            <person name="Sun H."/>
            <person name="Bradshaw-Cordum H."/>
            <person name="Ali J."/>
            <person name="Carter J."/>
            <person name="Cordes M."/>
            <person name="Harris A."/>
            <person name="Isak A."/>
            <person name="van Brunt A."/>
            <person name="Nguyen C."/>
            <person name="Du F."/>
            <person name="Courtney L."/>
            <person name="Kalicki J."/>
            <person name="Ozersky P."/>
            <person name="Abbott S."/>
            <person name="Armstrong J."/>
            <person name="Belter E.A."/>
            <person name="Caruso L."/>
            <person name="Cedroni M."/>
            <person name="Cotton M."/>
            <person name="Davidson T."/>
            <person name="Desai A."/>
            <person name="Elliott G."/>
            <person name="Erb T."/>
            <person name="Fronick C."/>
            <person name="Gaige T."/>
            <person name="Haakenson W."/>
            <person name="Haglund K."/>
            <person name="Holmes A."/>
            <person name="Harkins R."/>
            <person name="Kim K."/>
            <person name="Kruchowski S.S."/>
            <person name="Strong C.M."/>
            <person name="Grewal N."/>
            <person name="Goyea E."/>
            <person name="Hou S."/>
            <person name="Levy A."/>
            <person name="Martinka S."/>
            <person name="Mead K."/>
            <person name="McLellan M.D."/>
            <person name="Meyer R."/>
            <person name="Randall-Maher J."/>
            <person name="Tomlinson C."/>
            <person name="Dauphin-Kohlberg S."/>
            <person name="Kozlowicz-Reilly A."/>
            <person name="Shah N."/>
            <person name="Swearengen-Shahid S."/>
            <person name="Snider J."/>
            <person name="Strong J.T."/>
            <person name="Thompson J."/>
            <person name="Yoakum M."/>
            <person name="Leonard S."/>
            <person name="Pearman C."/>
            <person name="Trani L."/>
            <person name="Radionenko M."/>
            <person name="Waligorski J.E."/>
            <person name="Wang C."/>
            <person name="Rock S.M."/>
            <person name="Tin-Wollam A.-M."/>
            <person name="Maupin R."/>
            <person name="Latreille P."/>
            <person name="Wendl M.C."/>
            <person name="Yang S.-P."/>
            <person name="Pohl C."/>
            <person name="Wallis J.W."/>
            <person name="Spieth J."/>
            <person name="Bieri T.A."/>
            <person name="Berkowicz N."/>
            <person name="Nelson J.O."/>
            <person name="Osborne J."/>
            <person name="Ding L."/>
            <person name="Meyer R."/>
            <person name="Sabo A."/>
            <person name="Shotland Y."/>
            <person name="Sinha P."/>
            <person name="Wohldmann P.E."/>
            <person name="Cook L.L."/>
            <person name="Hickenbotham M.T."/>
            <person name="Eldred J."/>
            <person name="Williams D."/>
            <person name="Jones T.A."/>
            <person name="She X."/>
            <person name="Ciccarelli F.D."/>
            <person name="Izaurralde E."/>
            <person name="Taylor J."/>
            <person name="Schmutz J."/>
            <person name="Myers R.M."/>
            <person name="Cox D.R."/>
            <person name="Huang X."/>
            <person name="McPherson J.D."/>
            <person name="Mardis E.R."/>
            <person name="Clifton S.W."/>
            <person name="Warren W.C."/>
            <person name="Chinwalla A.T."/>
            <person name="Eddy S.R."/>
            <person name="Marra M.A."/>
            <person name="Ovcharenko I."/>
            <person name="Furey T.S."/>
            <person name="Miller W."/>
            <person name="Eichler E.E."/>
            <person name="Bork P."/>
            <person name="Suyama M."/>
            <person name="Torrents D."/>
            <person name="Waterston R.H."/>
            <person name="Wilson R.K."/>
        </authorList>
    </citation>
    <scope>NUCLEOTIDE SEQUENCE [LARGE SCALE GENOMIC DNA]</scope>
</reference>
<reference key="13">
    <citation type="submission" date="2005-07" db="EMBL/GenBank/DDBJ databases">
        <authorList>
            <person name="Mural R.J."/>
            <person name="Istrail S."/>
            <person name="Sutton G."/>
            <person name="Florea L."/>
            <person name="Halpern A.L."/>
            <person name="Mobarry C.M."/>
            <person name="Lippert R."/>
            <person name="Walenz B."/>
            <person name="Shatkay H."/>
            <person name="Dew I."/>
            <person name="Miller J.R."/>
            <person name="Flanigan M.J."/>
            <person name="Edwards N.J."/>
            <person name="Bolanos R."/>
            <person name="Fasulo D."/>
            <person name="Halldorsson B.V."/>
            <person name="Hannenhalli S."/>
            <person name="Turner R."/>
            <person name="Yooseph S."/>
            <person name="Lu F."/>
            <person name="Nusskern D.R."/>
            <person name="Shue B.C."/>
            <person name="Zheng X.H."/>
            <person name="Zhong F."/>
            <person name="Delcher A.L."/>
            <person name="Huson D.H."/>
            <person name="Kravitz S.A."/>
            <person name="Mouchard L."/>
            <person name="Reinert K."/>
            <person name="Remington K.A."/>
            <person name="Clark A.G."/>
            <person name="Waterman M.S."/>
            <person name="Eichler E.E."/>
            <person name="Adams M.D."/>
            <person name="Hunkapiller M.W."/>
            <person name="Myers E.W."/>
            <person name="Venter J.C."/>
        </authorList>
    </citation>
    <scope>NUCLEOTIDE SEQUENCE [LARGE SCALE GENOMIC DNA]</scope>
</reference>
<reference key="14">
    <citation type="journal article" date="2004" name="Genome Res.">
        <title>The status, quality, and expansion of the NIH full-length cDNA project: the Mammalian Gene Collection (MGC).</title>
        <authorList>
            <consortium name="The MGC Project Team"/>
        </authorList>
    </citation>
    <scope>NUCLEOTIDE SEQUENCE [LARGE SCALE MRNA] (ISOFORMS 1; 2 AND 3)</scope>
    <source>
        <tissue>Brain</tissue>
        <tissue>Kidney</tissue>
    </source>
</reference>
<reference key="15">
    <citation type="journal article" date="1992" name="Biochem. Biophys. Res. Commun.">
        <title>Molecular cloning and sequencing of cDNA encoding urinary stone protein, which is identical to osteopontin.</title>
        <authorList>
            <person name="Kohri K."/>
            <person name="Suzuki Y."/>
            <person name="Yoshida K."/>
            <person name="Yamamoto K."/>
            <person name="Amasaki N."/>
            <person name="Yamate T."/>
            <person name="Umekawa T."/>
            <person name="Iguchi M."/>
            <person name="Sinohara H."/>
            <person name="Kurita T."/>
        </authorList>
    </citation>
    <scope>NUCLEOTIDE SEQUENCE [MRNA] OF 67-278</scope>
    <source>
        <tissue>Kidney</tissue>
    </source>
</reference>
<reference key="16">
    <citation type="journal article" date="1989" name="Biochim. Biophys. Acta">
        <title>Purification of a human milk protein closely similar to tumor-secreted phosphoproteins and osteopontin.</title>
        <authorList>
            <person name="Senger D.R."/>
            <person name="Perruzzi C.A."/>
            <person name="Papadopoulos A."/>
            <person name="Tenen D.G."/>
        </authorList>
    </citation>
    <scope>PROTEIN SEQUENCE OF 17-23 AND 169-182</scope>
    <source>
        <tissue>Milk</tissue>
    </source>
</reference>
<reference key="17">
    <citation type="journal article" date="2005" name="Biochem. J.">
        <title>Post-translationally modified residues of native human osteopontin are located in clusters: identification of 36 phosphorylation and five O-glycosylation sites and their biological implications.</title>
        <authorList>
            <person name="Christensen B."/>
            <person name="Nielsen M.S."/>
            <person name="Haselmann K.F."/>
            <person name="Petersen T.E."/>
            <person name="Sorensen E.S."/>
        </authorList>
    </citation>
    <scope>PHOSPHORYLATION AT SER-24; SER-26; SER-27; SER-62; SER-63; THR-66; SER-76; SER-81; SER-99; SER-102; SER-108; SER-117; SER-120; SER-123; SER-129; THR-185; SER-191; SER-195; SER-215; SER-219; SER-224; SER-228; SER-234; SER-254; SER-263; SER-267; SER-275; SER-280; SER-303; SER-308; SER-310; SER-105 AND SER-126</scope>
    <scope>GLYCOSYLATION AT THR-134; THR-138; THR-143; THR-147 AND THR-152</scope>
    <source>
        <tissue>Milk</tissue>
    </source>
</reference>
<reference key="18">
    <citation type="journal article" date="2006" name="Pituitary">
        <title>Phosphoproteomic analysis of the human pituitary.</title>
        <authorList>
            <person name="Beranova-Giorgianni S."/>
            <person name="Zhao Y."/>
            <person name="Desiderio D.M."/>
            <person name="Giorgianni F."/>
        </authorList>
    </citation>
    <scope>PHOSPHORYLATION [LARGE SCALE ANALYSIS] AT SER-81</scope>
    <scope>IDENTIFICATION BY MASS SPECTROMETRY [LARGE SCALE ANALYSIS]</scope>
    <source>
        <tissue>Pituitary</tissue>
    </source>
</reference>
<reference key="19">
    <citation type="journal article" date="2011" name="Sci. Signal.">
        <title>System-wide temporal characterization of the proteome and phosphoproteome of human embryonic stem cell differentiation.</title>
        <authorList>
            <person name="Rigbolt K.T."/>
            <person name="Prokhorova T.A."/>
            <person name="Akimov V."/>
            <person name="Henningsen J."/>
            <person name="Johansen P.T."/>
            <person name="Kratchmarova I."/>
            <person name="Kassem M."/>
            <person name="Mann M."/>
            <person name="Olsen J.V."/>
            <person name="Blagoev B."/>
        </authorList>
    </citation>
    <scope>PHOSPHORYLATION [LARGE SCALE ANALYSIS] AT SER-219; SER-224; SER-234 AND SER-254</scope>
    <scope>IDENTIFICATION BY MASS SPECTROMETRY [LARGE SCALE ANALYSIS]</scope>
</reference>
<reference key="20">
    <citation type="journal article" date="2012" name="Science">
        <title>Secreted kinase phosphorylates extracellular proteins that regulate biomineralization.</title>
        <authorList>
            <person name="Tagliabracci V.S."/>
            <person name="Engel J.L."/>
            <person name="Wen J."/>
            <person name="Wiley S.E."/>
            <person name="Worby C.A."/>
            <person name="Kinch L.N."/>
            <person name="Xiao J."/>
            <person name="Grishin N.V."/>
            <person name="Dixon J.E."/>
        </authorList>
    </citation>
    <scope>PHOSPHORYLATION BY FAM20C</scope>
</reference>
<reference key="21">
    <citation type="journal article" date="2013" name="J. Proteome Res.">
        <title>LC-MS/MS characterization of O-glycosylation sites and glycan structures of human cerebrospinal fluid glycoproteins.</title>
        <authorList>
            <person name="Halim A."/>
            <person name="Ruetschi U."/>
            <person name="Larson G."/>
            <person name="Nilsson J."/>
        </authorList>
    </citation>
    <scope>GLYCOSYLATION</scope>
    <scope>IDENTIFICATION BY MASS SPECTROMETRY</scope>
</reference>
<reference key="22">
    <citation type="journal article" date="2014" name="J. Proteomics">
        <title>An enzyme assisted RP-RPLC approach for in-depth analysis of human liver phosphoproteome.</title>
        <authorList>
            <person name="Bian Y."/>
            <person name="Song C."/>
            <person name="Cheng K."/>
            <person name="Dong M."/>
            <person name="Wang F."/>
            <person name="Huang J."/>
            <person name="Sun D."/>
            <person name="Wang L."/>
            <person name="Ye M."/>
            <person name="Zou H."/>
        </authorList>
    </citation>
    <scope>IDENTIFICATION BY MASS SPECTROMETRY [LARGE SCALE ANALYSIS]</scope>
    <source>
        <tissue>Liver</tissue>
    </source>
</reference>
<reference key="23">
    <citation type="journal article" date="2015" name="Cell">
        <title>A single kinase generates the majority of the secreted phosphoproteome.</title>
        <authorList>
            <person name="Tagliabracci V.S."/>
            <person name="Wiley S.E."/>
            <person name="Guo X."/>
            <person name="Kinch L.N."/>
            <person name="Durrant E."/>
            <person name="Wen J."/>
            <person name="Xiao J."/>
            <person name="Cui J."/>
            <person name="Nguyen K.B."/>
            <person name="Engel J.L."/>
            <person name="Coon J.J."/>
            <person name="Grishin N."/>
            <person name="Pinna L.A."/>
            <person name="Pagliarini D.J."/>
            <person name="Dixon J.E."/>
        </authorList>
    </citation>
    <scope>PHOSPHORYLATION AT SER-26; SER-27; SER-62; SER-63; THR-190; SER-191; SER-195; SER-215; SER-219; SER-224; TYR-225; SER-228; SER-234; THR-237; SER-239; SER-243; SER-254; SER-258; SER-263; SER-267; SER-270; SER-275; SER-280; SER-291; SER-303; SER-308; SER-310 AND SER-311</scope>
</reference>
<reference key="24">
    <citation type="journal article" date="2015" name="Mol. Cell. Proteomics">
        <title>Identification of chondroitin sulfate linkage region glycopeptides reveals prohormones as a novel class of proteoglycans.</title>
        <authorList>
            <person name="Noborn F."/>
            <person name="Gomez Toledo A."/>
            <person name="Sihlbom C."/>
            <person name="Lengqvist J."/>
            <person name="Fries E."/>
            <person name="Kjellen L."/>
            <person name="Nilsson J."/>
            <person name="Larson G."/>
        </authorList>
    </citation>
    <scope>SUBCELLULAR LOCATION</scope>
    <scope>TISSUE SPECIFICITY</scope>
    <scope>GLYCOSYLATION AT SER-234 AND SER-308</scope>
</reference>
<reference key="25">
    <citation type="journal article" date="2022" name="J. Proteins Proteom.">
        <title>Mass spectrometric analysis of chondroitin sulfate-linked peptides.</title>
        <authorList>
            <person name="Ramarajan M.G."/>
            <person name="Saraswat M."/>
            <person name="Budhraja R."/>
            <person name="Garapati K."/>
            <person name="Raymond K."/>
            <person name="Pandey A."/>
        </authorList>
    </citation>
    <scope>SUBCELLULAR LOCATION</scope>
    <scope>TISSUE SPECIFICITY</scope>
    <scope>GLYCOSYLATION AT SER-308</scope>
</reference>
<reference key="26">
    <citation type="journal article" date="2023" name="Mol. Cell. Proteomics">
        <title>Mapping the Human Chondroitin Sulfate Glycoproteome Reveals an Unexpected Correlation Between Glycan Sulfation and Attachment Site Characteristics.</title>
        <authorList>
            <person name="Noborn F."/>
            <person name="Nilsson J."/>
            <person name="Sihlbom C."/>
            <person name="Nikpour M."/>
            <person name="Kjellen L."/>
            <person name="Larson G."/>
        </authorList>
    </citation>
    <scope>SUBCELLULAR LOCATION</scope>
    <scope>TISSUE SPECIFICITY</scope>
    <scope>GLYCOSYLATION AT SER-234 AND SER-308</scope>
</reference>
<protein>
    <recommendedName>
        <fullName evidence="16 17">Osteopontin</fullName>
    </recommendedName>
    <alternativeName>
        <fullName>Bone sialoprotein 1</fullName>
    </alternativeName>
    <alternativeName>
        <fullName>Nephropontin</fullName>
    </alternativeName>
    <alternativeName>
        <fullName>Secreted phosphoprotein 1</fullName>
        <shortName>SPP-1</shortName>
    </alternativeName>
    <alternativeName>
        <fullName evidence="15">Urinary stone protein</fullName>
    </alternativeName>
    <alternativeName>
        <fullName evidence="15">Uropontin</fullName>
    </alternativeName>
</protein>
<evidence type="ECO:0000250" key="1">
    <source>
        <dbReference type="UniProtKB" id="P10923"/>
    </source>
</evidence>
<evidence type="ECO:0000250" key="2">
    <source>
        <dbReference type="UniProtKB" id="P31096"/>
    </source>
</evidence>
<evidence type="ECO:0000255" key="3"/>
<evidence type="ECO:0000256" key="4">
    <source>
        <dbReference type="SAM" id="MobiDB-lite"/>
    </source>
</evidence>
<evidence type="ECO:0000269" key="5">
    <source>
    </source>
</evidence>
<evidence type="ECO:0000269" key="6">
    <source>
    </source>
</evidence>
<evidence type="ECO:0000269" key="7">
    <source>
    </source>
</evidence>
<evidence type="ECO:0000269" key="8">
    <source>
    </source>
</evidence>
<evidence type="ECO:0000269" key="9">
    <source>
    </source>
</evidence>
<evidence type="ECO:0000269" key="10">
    <source>
    </source>
</evidence>
<evidence type="ECO:0000269" key="11">
    <source>
    </source>
</evidence>
<evidence type="ECO:0000303" key="12">
    <source>
    </source>
</evidence>
<evidence type="ECO:0000303" key="13">
    <source>
    </source>
</evidence>
<evidence type="ECO:0000303" key="14">
    <source>
    </source>
</evidence>
<evidence type="ECO:0000303" key="15">
    <source>
    </source>
</evidence>
<evidence type="ECO:0000303" key="16">
    <source>
    </source>
</evidence>
<evidence type="ECO:0000303" key="17">
    <source>
    </source>
</evidence>
<evidence type="ECO:0000303" key="18">
    <source>
    </source>
</evidence>
<evidence type="ECO:0000303" key="19">
    <source ref="7"/>
</evidence>
<evidence type="ECO:0000303" key="20">
    <source ref="8"/>
</evidence>
<evidence type="ECO:0000305" key="21"/>
<evidence type="ECO:0007744" key="22">
    <source>
    </source>
</evidence>
<evidence type="ECO:0007744" key="23">
    <source>
    </source>
</evidence>
<evidence type="ECO:0007829" key="24">
    <source>
        <dbReference type="PDB" id="3CXD"/>
    </source>
</evidence>